<organism>
    <name type="scientific">Vibrio cholerae serotype O1 (strain ATCC 39315 / El Tor Inaba N16961)</name>
    <dbReference type="NCBI Taxonomy" id="243277"/>
    <lineage>
        <taxon>Bacteria</taxon>
        <taxon>Pseudomonadati</taxon>
        <taxon>Pseudomonadota</taxon>
        <taxon>Gammaproteobacteria</taxon>
        <taxon>Vibrionales</taxon>
        <taxon>Vibrionaceae</taxon>
        <taxon>Vibrio</taxon>
    </lineage>
</organism>
<feature type="chain" id="PRO_0000166415" description="Ribonuclease R">
    <location>
        <begin position="1"/>
        <end position="821"/>
    </location>
</feature>
<feature type="domain" description="RNB" evidence="1">
    <location>
        <begin position="267"/>
        <end position="593"/>
    </location>
</feature>
<feature type="domain" description="S1 motif" evidence="2">
    <location>
        <begin position="652"/>
        <end position="733"/>
    </location>
</feature>
<feature type="region of interest" description="Disordered" evidence="3">
    <location>
        <begin position="739"/>
        <end position="821"/>
    </location>
</feature>
<feature type="compositionally biased region" description="Basic and acidic residues" evidence="3">
    <location>
        <begin position="748"/>
        <end position="764"/>
    </location>
</feature>
<feature type="compositionally biased region" description="Basic and acidic residues" evidence="3">
    <location>
        <begin position="774"/>
        <end position="794"/>
    </location>
</feature>
<feature type="compositionally biased region" description="Basic residues" evidence="3">
    <location>
        <begin position="795"/>
        <end position="814"/>
    </location>
</feature>
<gene>
    <name evidence="2" type="primary">rnr</name>
    <name type="ordered locus">VC_2599</name>
</gene>
<protein>
    <recommendedName>
        <fullName evidence="2">Ribonuclease R</fullName>
        <shortName evidence="2">RNase R</shortName>
        <ecNumber evidence="2">3.1.13.1</ecNumber>
    </recommendedName>
</protein>
<accession>Q9KNY1</accession>
<keyword id="KW-0963">Cytoplasm</keyword>
<keyword id="KW-0269">Exonuclease</keyword>
<keyword id="KW-0378">Hydrolase</keyword>
<keyword id="KW-0540">Nuclease</keyword>
<keyword id="KW-1185">Reference proteome</keyword>
<keyword id="KW-0694">RNA-binding</keyword>
<evidence type="ECO:0000255" key="1"/>
<evidence type="ECO:0000255" key="2">
    <source>
        <dbReference type="HAMAP-Rule" id="MF_01895"/>
    </source>
</evidence>
<evidence type="ECO:0000256" key="3">
    <source>
        <dbReference type="SAM" id="MobiDB-lite"/>
    </source>
</evidence>
<reference key="1">
    <citation type="journal article" date="2000" name="Nature">
        <title>DNA sequence of both chromosomes of the cholera pathogen Vibrio cholerae.</title>
        <authorList>
            <person name="Heidelberg J.F."/>
            <person name="Eisen J.A."/>
            <person name="Nelson W.C."/>
            <person name="Clayton R.A."/>
            <person name="Gwinn M.L."/>
            <person name="Dodson R.J."/>
            <person name="Haft D.H."/>
            <person name="Hickey E.K."/>
            <person name="Peterson J.D."/>
            <person name="Umayam L.A."/>
            <person name="Gill S.R."/>
            <person name="Nelson K.E."/>
            <person name="Read T.D."/>
            <person name="Tettelin H."/>
            <person name="Richardson D.L."/>
            <person name="Ermolaeva M.D."/>
            <person name="Vamathevan J.J."/>
            <person name="Bass S."/>
            <person name="Qin H."/>
            <person name="Dragoi I."/>
            <person name="Sellers P."/>
            <person name="McDonald L.A."/>
            <person name="Utterback T.R."/>
            <person name="Fleischmann R.D."/>
            <person name="Nierman W.C."/>
            <person name="White O."/>
            <person name="Salzberg S.L."/>
            <person name="Smith H.O."/>
            <person name="Colwell R.R."/>
            <person name="Mekalanos J.J."/>
            <person name="Venter J.C."/>
            <person name="Fraser C.M."/>
        </authorList>
    </citation>
    <scope>NUCLEOTIDE SEQUENCE [LARGE SCALE GENOMIC DNA]</scope>
    <source>
        <strain>ATCC 39315 / El Tor Inaba N16961</strain>
    </source>
</reference>
<name>RNR_VIBCH</name>
<proteinExistence type="inferred from homology"/>
<sequence length="821" mass="93334">MSDTTHLDPFADREADNYDNPIPSREYILEFLTQANVPMNRNDLFEALKLEGEEQYEGLRRRLRAMERDGQLVFTRRQCYALPEKLEMVKGYVIGHKDGHGWVRPEGSLNKEGDILLPHHQMRTLIHGDFVLVQPSGTDKRGRKEGRLVRILEERNGQIVGRFFFEYGYSYVVPDDSRIHHDILIPNDLRAGARMGNVVVIEITDRGTRNRGMMGKVVEVLGENMAPGMETQIAIRTHQIPHEWPAEVEQQVAGLTEEVPEEAKQGRVDLRALPLVTIDGEDARDFDDAVYCEAKKGGGWRLWVAIADVSYYVRPDTALDKEAINRGNSVYFPSQVVPMLPEVLSNGLCSLNPQVDRLCMVCEMTVSETGKLSGYKHYEAVMNSHARLTYTKVHEILEGDEELRERYKALVPHLEELHKMYQVLKSARDERGAIEFETVETKFIFNAQRKIESIEPVVRNDAHKLIEECMILANIASASLVEKAKEAALYRVHEPPGEERLTGFRDFLGELGLDLSGGLEPSPTDYANLMKQIGERPDKELIQTMLLRSMKQAVYNADNAGHFGLALKRYAHFTSPIRRYPDLLLHRAIKYLIAKQEGRNQDRWTPTGGYHYSFDDMDFYGEQCSMTERRADDATREVSDWLKCEYMQDHVGEELEGVVANVTSFGFFVRLTELHIDGLVHISTLANDYYHYDPIGQRLVGESFGAIYRLGDAVKVKVLAVNLDDRQIDFELVETSRKLRGQGKTAKKRADEARAKAQGKKEAATKGACGKSPTKSELKPQVEATRRPDSEGRSKPKKTKAPKKRKDQARKKSGKVRDKTK</sequence>
<dbReference type="EC" id="3.1.13.1" evidence="2"/>
<dbReference type="EMBL" id="AE003852">
    <property type="protein sequence ID" value="AAF95740.1"/>
    <property type="molecule type" value="Genomic_DNA"/>
</dbReference>
<dbReference type="PIR" id="C82055">
    <property type="entry name" value="C82055"/>
</dbReference>
<dbReference type="RefSeq" id="NP_232227.1">
    <property type="nucleotide sequence ID" value="NC_002505.1"/>
</dbReference>
<dbReference type="RefSeq" id="WP_001285863.1">
    <property type="nucleotide sequence ID" value="NZ_LT906614.1"/>
</dbReference>
<dbReference type="SMR" id="Q9KNY1"/>
<dbReference type="STRING" id="243277.VC_2599"/>
<dbReference type="DNASU" id="2615616"/>
<dbReference type="EnsemblBacteria" id="AAF95740">
    <property type="protein sequence ID" value="AAF95740"/>
    <property type="gene ID" value="VC_2599"/>
</dbReference>
<dbReference type="KEGG" id="vch:VC_2599"/>
<dbReference type="PATRIC" id="fig|243277.26.peg.2478"/>
<dbReference type="eggNOG" id="COG0557">
    <property type="taxonomic scope" value="Bacteria"/>
</dbReference>
<dbReference type="HOGENOM" id="CLU_002333_7_0_6"/>
<dbReference type="Proteomes" id="UP000000584">
    <property type="component" value="Chromosome 1"/>
</dbReference>
<dbReference type="GO" id="GO:0005829">
    <property type="term" value="C:cytosol"/>
    <property type="evidence" value="ECO:0000318"/>
    <property type="project" value="GO_Central"/>
</dbReference>
<dbReference type="GO" id="GO:0008859">
    <property type="term" value="F:exoribonuclease II activity"/>
    <property type="evidence" value="ECO:0007669"/>
    <property type="project" value="UniProtKB-UniRule"/>
</dbReference>
<dbReference type="GO" id="GO:0003723">
    <property type="term" value="F:RNA binding"/>
    <property type="evidence" value="ECO:0007669"/>
    <property type="project" value="UniProtKB-UniRule"/>
</dbReference>
<dbReference type="GO" id="GO:0006402">
    <property type="term" value="P:mRNA catabolic process"/>
    <property type="evidence" value="ECO:0000318"/>
    <property type="project" value="GO_Central"/>
</dbReference>
<dbReference type="CDD" id="cd04471">
    <property type="entry name" value="S1_RNase_R"/>
    <property type="match status" value="1"/>
</dbReference>
<dbReference type="FunFam" id="2.40.50.140:FF:000124">
    <property type="entry name" value="Ribonuclease R"/>
    <property type="match status" value="1"/>
</dbReference>
<dbReference type="FunFam" id="2.40.50.140:FF:000161">
    <property type="entry name" value="Ribonuclease R"/>
    <property type="match status" value="1"/>
</dbReference>
<dbReference type="Gene3D" id="2.40.50.140">
    <property type="entry name" value="Nucleic acid-binding proteins"/>
    <property type="match status" value="2"/>
</dbReference>
<dbReference type="HAMAP" id="MF_01895">
    <property type="entry name" value="RNase_R"/>
    <property type="match status" value="1"/>
</dbReference>
<dbReference type="InterPro" id="IPR011129">
    <property type="entry name" value="CSD"/>
</dbReference>
<dbReference type="InterPro" id="IPR040476">
    <property type="entry name" value="CSD2"/>
</dbReference>
<dbReference type="InterPro" id="IPR012340">
    <property type="entry name" value="NA-bd_OB-fold"/>
</dbReference>
<dbReference type="InterPro" id="IPR013223">
    <property type="entry name" value="RNase_B_OB_dom"/>
</dbReference>
<dbReference type="InterPro" id="IPR001900">
    <property type="entry name" value="RNase_II/R"/>
</dbReference>
<dbReference type="InterPro" id="IPR022966">
    <property type="entry name" value="RNase_II/R_CS"/>
</dbReference>
<dbReference type="InterPro" id="IPR004476">
    <property type="entry name" value="RNase_II/RNase_R"/>
</dbReference>
<dbReference type="InterPro" id="IPR011805">
    <property type="entry name" value="RNase_R"/>
</dbReference>
<dbReference type="InterPro" id="IPR013668">
    <property type="entry name" value="RNase_R_HTH_12"/>
</dbReference>
<dbReference type="InterPro" id="IPR050180">
    <property type="entry name" value="RNR_Ribonuclease"/>
</dbReference>
<dbReference type="InterPro" id="IPR003029">
    <property type="entry name" value="S1_domain"/>
</dbReference>
<dbReference type="NCBIfam" id="TIGR00358">
    <property type="entry name" value="3_prime_RNase"/>
    <property type="match status" value="1"/>
</dbReference>
<dbReference type="NCBIfam" id="NF008648">
    <property type="entry name" value="PRK11642.1"/>
    <property type="match status" value="1"/>
</dbReference>
<dbReference type="NCBIfam" id="TIGR02063">
    <property type="entry name" value="RNase_R"/>
    <property type="match status" value="1"/>
</dbReference>
<dbReference type="PANTHER" id="PTHR23355:SF9">
    <property type="entry name" value="DIS3-LIKE EXONUCLEASE 2"/>
    <property type="match status" value="1"/>
</dbReference>
<dbReference type="PANTHER" id="PTHR23355">
    <property type="entry name" value="RIBONUCLEASE"/>
    <property type="match status" value="1"/>
</dbReference>
<dbReference type="Pfam" id="PF17876">
    <property type="entry name" value="CSD2"/>
    <property type="match status" value="1"/>
</dbReference>
<dbReference type="Pfam" id="PF08461">
    <property type="entry name" value="HTH_12"/>
    <property type="match status" value="1"/>
</dbReference>
<dbReference type="Pfam" id="PF08206">
    <property type="entry name" value="OB_RNB"/>
    <property type="match status" value="1"/>
</dbReference>
<dbReference type="Pfam" id="PF00773">
    <property type="entry name" value="RNB"/>
    <property type="match status" value="1"/>
</dbReference>
<dbReference type="Pfam" id="PF00575">
    <property type="entry name" value="S1"/>
    <property type="match status" value="1"/>
</dbReference>
<dbReference type="SMART" id="SM00357">
    <property type="entry name" value="CSP"/>
    <property type="match status" value="1"/>
</dbReference>
<dbReference type="SMART" id="SM00955">
    <property type="entry name" value="RNB"/>
    <property type="match status" value="1"/>
</dbReference>
<dbReference type="SMART" id="SM00316">
    <property type="entry name" value="S1"/>
    <property type="match status" value="1"/>
</dbReference>
<dbReference type="SUPFAM" id="SSF50249">
    <property type="entry name" value="Nucleic acid-binding proteins"/>
    <property type="match status" value="4"/>
</dbReference>
<dbReference type="PROSITE" id="PS01175">
    <property type="entry name" value="RIBONUCLEASE_II"/>
    <property type="match status" value="1"/>
</dbReference>
<dbReference type="PROSITE" id="PS50126">
    <property type="entry name" value="S1"/>
    <property type="match status" value="1"/>
</dbReference>
<comment type="function">
    <text evidence="2">3'-5' exoribonuclease that releases 5'-nucleoside monophosphates and is involved in maturation of structured RNAs.</text>
</comment>
<comment type="catalytic activity">
    <reaction evidence="2">
        <text>Exonucleolytic cleavage in the 3'- to 5'-direction to yield nucleoside 5'-phosphates.</text>
        <dbReference type="EC" id="3.1.13.1"/>
    </reaction>
</comment>
<comment type="subcellular location">
    <subcellularLocation>
        <location evidence="2">Cytoplasm</location>
    </subcellularLocation>
</comment>
<comment type="similarity">
    <text evidence="2">Belongs to the RNR ribonuclease family. RNase R subfamily.</text>
</comment>